<name>CLPX_LACH4</name>
<gene>
    <name evidence="1" type="primary">clpX</name>
    <name type="ordered locus">lhv_0897</name>
</gene>
<proteinExistence type="inferred from homology"/>
<protein>
    <recommendedName>
        <fullName evidence="1">ATP-dependent Clp protease ATP-binding subunit ClpX</fullName>
    </recommendedName>
</protein>
<reference key="1">
    <citation type="journal article" date="2008" name="J. Bacteriol.">
        <title>Genome sequence of Lactobacillus helveticus: an organism distinguished by selective gene loss and IS element expansion.</title>
        <authorList>
            <person name="Callanan M."/>
            <person name="Kaleta P."/>
            <person name="O'Callaghan J."/>
            <person name="O'Sullivan O."/>
            <person name="Jordan K."/>
            <person name="McAuliffe O."/>
            <person name="Sangrador-Vegas A."/>
            <person name="Slattery L."/>
            <person name="Fitzgerald G.F."/>
            <person name="Beresford T."/>
            <person name="Ross R.P."/>
        </authorList>
    </citation>
    <scope>NUCLEOTIDE SEQUENCE [LARGE SCALE GENOMIC DNA]</scope>
    <source>
        <strain>DPC 4571</strain>
    </source>
</reference>
<feature type="chain" id="PRO_1000071623" description="ATP-dependent Clp protease ATP-binding subunit ClpX">
    <location>
        <begin position="1"/>
        <end position="424"/>
    </location>
</feature>
<feature type="domain" description="ClpX-type ZB" evidence="2">
    <location>
        <begin position="1"/>
        <end position="54"/>
    </location>
</feature>
<feature type="binding site" evidence="2">
    <location>
        <position position="13"/>
    </location>
    <ligand>
        <name>Zn(2+)</name>
        <dbReference type="ChEBI" id="CHEBI:29105"/>
    </ligand>
</feature>
<feature type="binding site" evidence="2">
    <location>
        <position position="16"/>
    </location>
    <ligand>
        <name>Zn(2+)</name>
        <dbReference type="ChEBI" id="CHEBI:29105"/>
    </ligand>
</feature>
<feature type="binding site" evidence="2">
    <location>
        <position position="35"/>
    </location>
    <ligand>
        <name>Zn(2+)</name>
        <dbReference type="ChEBI" id="CHEBI:29105"/>
    </ligand>
</feature>
<feature type="binding site" evidence="2">
    <location>
        <position position="38"/>
    </location>
    <ligand>
        <name>Zn(2+)</name>
        <dbReference type="ChEBI" id="CHEBI:29105"/>
    </ligand>
</feature>
<feature type="binding site" evidence="1">
    <location>
        <begin position="117"/>
        <end position="124"/>
    </location>
    <ligand>
        <name>ATP</name>
        <dbReference type="ChEBI" id="CHEBI:30616"/>
    </ligand>
</feature>
<sequence>MANQFTDQEEIKCSFCGKTQDQVKKMIAGNGVYICNECVDLSKKIIDDELRADSVKTAIELPKPMEIKKQLDQYVIGQNRAKKVLSVAVYNHYKRISQMDFDSSTELQKSNIAMIGPTGSGKTYLAQTLARILNVPFAIADATTLTEAGYVGEDVENILLKLLQNADYDLERAQRGIIYIDEIDKISKKSENVSITRDVSGEGVQQSLLKILEGTIASVPPQGGRKHPQQEMIKIDTTNILFIVGGAFDGIEQIVKNRLGKKTIGFGAENDVDKIDADDWTRHLTTADLVKFGMIPEFIGRIPIITTLDNLSSEDLVRVLTEPKNALVKQYKKLLSLDGVDLKFTDGALKAIADLAIQRNMGARGLRTIIENSIMDIMYKTPSEKDIEAVEVTKDVIIRHAEPKVIRKKDKKESSKARVGANDN</sequence>
<dbReference type="EMBL" id="CP000517">
    <property type="protein sequence ID" value="ABX27012.1"/>
    <property type="molecule type" value="Genomic_DNA"/>
</dbReference>
<dbReference type="RefSeq" id="WP_012211725.1">
    <property type="nucleotide sequence ID" value="NC_010080.1"/>
</dbReference>
<dbReference type="SMR" id="A8YUS4"/>
<dbReference type="KEGG" id="lhe:lhv_0897"/>
<dbReference type="eggNOG" id="COG1219">
    <property type="taxonomic scope" value="Bacteria"/>
</dbReference>
<dbReference type="HOGENOM" id="CLU_014218_8_2_9"/>
<dbReference type="Proteomes" id="UP000000790">
    <property type="component" value="Chromosome"/>
</dbReference>
<dbReference type="GO" id="GO:0009376">
    <property type="term" value="C:HslUV protease complex"/>
    <property type="evidence" value="ECO:0007669"/>
    <property type="project" value="TreeGrafter"/>
</dbReference>
<dbReference type="GO" id="GO:0005524">
    <property type="term" value="F:ATP binding"/>
    <property type="evidence" value="ECO:0007669"/>
    <property type="project" value="UniProtKB-UniRule"/>
</dbReference>
<dbReference type="GO" id="GO:0016887">
    <property type="term" value="F:ATP hydrolysis activity"/>
    <property type="evidence" value="ECO:0007669"/>
    <property type="project" value="InterPro"/>
</dbReference>
<dbReference type="GO" id="GO:0140662">
    <property type="term" value="F:ATP-dependent protein folding chaperone"/>
    <property type="evidence" value="ECO:0007669"/>
    <property type="project" value="InterPro"/>
</dbReference>
<dbReference type="GO" id="GO:0046983">
    <property type="term" value="F:protein dimerization activity"/>
    <property type="evidence" value="ECO:0007669"/>
    <property type="project" value="InterPro"/>
</dbReference>
<dbReference type="GO" id="GO:0051082">
    <property type="term" value="F:unfolded protein binding"/>
    <property type="evidence" value="ECO:0007669"/>
    <property type="project" value="UniProtKB-UniRule"/>
</dbReference>
<dbReference type="GO" id="GO:0008270">
    <property type="term" value="F:zinc ion binding"/>
    <property type="evidence" value="ECO:0007669"/>
    <property type="project" value="InterPro"/>
</dbReference>
<dbReference type="GO" id="GO:0051301">
    <property type="term" value="P:cell division"/>
    <property type="evidence" value="ECO:0007669"/>
    <property type="project" value="TreeGrafter"/>
</dbReference>
<dbReference type="GO" id="GO:0051603">
    <property type="term" value="P:proteolysis involved in protein catabolic process"/>
    <property type="evidence" value="ECO:0007669"/>
    <property type="project" value="TreeGrafter"/>
</dbReference>
<dbReference type="CDD" id="cd19497">
    <property type="entry name" value="RecA-like_ClpX"/>
    <property type="match status" value="1"/>
</dbReference>
<dbReference type="FunFam" id="1.10.8.60:FF:000002">
    <property type="entry name" value="ATP-dependent Clp protease ATP-binding subunit ClpX"/>
    <property type="match status" value="1"/>
</dbReference>
<dbReference type="FunFam" id="3.40.50.300:FF:000005">
    <property type="entry name" value="ATP-dependent Clp protease ATP-binding subunit ClpX"/>
    <property type="match status" value="1"/>
</dbReference>
<dbReference type="Gene3D" id="1.10.8.60">
    <property type="match status" value="1"/>
</dbReference>
<dbReference type="Gene3D" id="6.20.220.10">
    <property type="entry name" value="ClpX chaperone, C4-type zinc finger domain"/>
    <property type="match status" value="1"/>
</dbReference>
<dbReference type="Gene3D" id="3.40.50.300">
    <property type="entry name" value="P-loop containing nucleotide triphosphate hydrolases"/>
    <property type="match status" value="1"/>
</dbReference>
<dbReference type="HAMAP" id="MF_00175">
    <property type="entry name" value="ClpX"/>
    <property type="match status" value="1"/>
</dbReference>
<dbReference type="InterPro" id="IPR003593">
    <property type="entry name" value="AAA+_ATPase"/>
</dbReference>
<dbReference type="InterPro" id="IPR050052">
    <property type="entry name" value="ATP-dep_Clp_protease_ClpX"/>
</dbReference>
<dbReference type="InterPro" id="IPR003959">
    <property type="entry name" value="ATPase_AAA_core"/>
</dbReference>
<dbReference type="InterPro" id="IPR019489">
    <property type="entry name" value="Clp_ATPase_C"/>
</dbReference>
<dbReference type="InterPro" id="IPR004487">
    <property type="entry name" value="Clp_protease_ATP-bd_su_ClpX"/>
</dbReference>
<dbReference type="InterPro" id="IPR046425">
    <property type="entry name" value="ClpX_bact"/>
</dbReference>
<dbReference type="InterPro" id="IPR027417">
    <property type="entry name" value="P-loop_NTPase"/>
</dbReference>
<dbReference type="InterPro" id="IPR010603">
    <property type="entry name" value="Znf_CppX_C4"/>
</dbReference>
<dbReference type="InterPro" id="IPR038366">
    <property type="entry name" value="Znf_CppX_C4_sf"/>
</dbReference>
<dbReference type="NCBIfam" id="TIGR00382">
    <property type="entry name" value="clpX"/>
    <property type="match status" value="1"/>
</dbReference>
<dbReference type="NCBIfam" id="NF003745">
    <property type="entry name" value="PRK05342.1"/>
    <property type="match status" value="1"/>
</dbReference>
<dbReference type="PANTHER" id="PTHR48102:SF7">
    <property type="entry name" value="ATP-DEPENDENT CLP PROTEASE ATP-BINDING SUBUNIT CLPX-LIKE, MITOCHONDRIAL"/>
    <property type="match status" value="1"/>
</dbReference>
<dbReference type="PANTHER" id="PTHR48102">
    <property type="entry name" value="ATP-DEPENDENT CLP PROTEASE ATP-BINDING SUBUNIT CLPX-LIKE, MITOCHONDRIAL-RELATED"/>
    <property type="match status" value="1"/>
</dbReference>
<dbReference type="Pfam" id="PF07724">
    <property type="entry name" value="AAA_2"/>
    <property type="match status" value="1"/>
</dbReference>
<dbReference type="Pfam" id="PF10431">
    <property type="entry name" value="ClpB_D2-small"/>
    <property type="match status" value="1"/>
</dbReference>
<dbReference type="Pfam" id="PF06689">
    <property type="entry name" value="zf-C4_ClpX"/>
    <property type="match status" value="1"/>
</dbReference>
<dbReference type="SMART" id="SM00382">
    <property type="entry name" value="AAA"/>
    <property type="match status" value="1"/>
</dbReference>
<dbReference type="SMART" id="SM01086">
    <property type="entry name" value="ClpB_D2-small"/>
    <property type="match status" value="1"/>
</dbReference>
<dbReference type="SMART" id="SM00994">
    <property type="entry name" value="zf-C4_ClpX"/>
    <property type="match status" value="1"/>
</dbReference>
<dbReference type="SUPFAM" id="SSF57716">
    <property type="entry name" value="Glucocorticoid receptor-like (DNA-binding domain)"/>
    <property type="match status" value="1"/>
</dbReference>
<dbReference type="SUPFAM" id="SSF52540">
    <property type="entry name" value="P-loop containing nucleoside triphosphate hydrolases"/>
    <property type="match status" value="1"/>
</dbReference>
<dbReference type="PROSITE" id="PS51902">
    <property type="entry name" value="CLPX_ZB"/>
    <property type="match status" value="1"/>
</dbReference>
<evidence type="ECO:0000255" key="1">
    <source>
        <dbReference type="HAMAP-Rule" id="MF_00175"/>
    </source>
</evidence>
<evidence type="ECO:0000255" key="2">
    <source>
        <dbReference type="PROSITE-ProRule" id="PRU01250"/>
    </source>
</evidence>
<comment type="function">
    <text evidence="1">ATP-dependent specificity component of the Clp protease. It directs the protease to specific substrates. Can perform chaperone functions in the absence of ClpP.</text>
</comment>
<comment type="subunit">
    <text evidence="1">Component of the ClpX-ClpP complex. Forms a hexameric ring that, in the presence of ATP, binds to fourteen ClpP subunits assembled into a disk-like structure with a central cavity, resembling the structure of eukaryotic proteasomes.</text>
</comment>
<comment type="similarity">
    <text evidence="1">Belongs to the ClpX chaperone family.</text>
</comment>
<keyword id="KW-0067">ATP-binding</keyword>
<keyword id="KW-0143">Chaperone</keyword>
<keyword id="KW-0479">Metal-binding</keyword>
<keyword id="KW-0547">Nucleotide-binding</keyword>
<keyword id="KW-0862">Zinc</keyword>
<accession>A8YUS4</accession>
<organism>
    <name type="scientific">Lactobacillus helveticus (strain DPC 4571)</name>
    <dbReference type="NCBI Taxonomy" id="405566"/>
    <lineage>
        <taxon>Bacteria</taxon>
        <taxon>Bacillati</taxon>
        <taxon>Bacillota</taxon>
        <taxon>Bacilli</taxon>
        <taxon>Lactobacillales</taxon>
        <taxon>Lactobacillaceae</taxon>
        <taxon>Lactobacillus</taxon>
    </lineage>
</organism>